<protein>
    <recommendedName>
        <fullName evidence="1">Adenylosuccinate synthetase</fullName>
        <shortName evidence="1">AMPSase</shortName>
        <shortName evidence="1">AdSS</shortName>
        <ecNumber evidence="1">6.3.4.4</ecNumber>
    </recommendedName>
    <alternativeName>
        <fullName evidence="1">IMP--aspartate ligase</fullName>
    </alternativeName>
</protein>
<keyword id="KW-0963">Cytoplasm</keyword>
<keyword id="KW-0342">GTP-binding</keyword>
<keyword id="KW-0436">Ligase</keyword>
<keyword id="KW-0460">Magnesium</keyword>
<keyword id="KW-0479">Metal-binding</keyword>
<keyword id="KW-0547">Nucleotide-binding</keyword>
<keyword id="KW-0658">Purine biosynthesis</keyword>
<keyword id="KW-1185">Reference proteome</keyword>
<accession>Q9K012</accession>
<sequence>MAKNVVVIGAQWGDEGKGKIVDWLAEEAGGVVRFQGGHNAGHTLVVGGKKTILRLIPSGILHESLDCFIGSGVVVSPEALLGEIDELNAAGVKNVEGRLKIAPTCPLILPYHIALDQAREASRGKGKIGTTGRGIGPAYEDKVARRAIRAADLLHPEKLREKLDAVLAYYNVQLQHLHNAEPVKAEDVMAVIEKVAPRIAPMITDVSRVLNEKNKNGEKLLFEGAQGALLDIDYGTYPFVTSSNCLAGAASAGAGVGPQMLDYVLGIVKAYTTRVGSGPFPTELFDEVGVGLAERGHEFGSVTGRARRCGWFDAAALKRSIQINGISGMCITKLDVMDGVETINICVGYELPDGGKTDILPCGSDAVETCKPIYETMPGWRESTFGVKDYGALPENAKAYLKRIEEVCGAPVAIVSTGPDREETIVLHHPFA</sequence>
<feature type="chain" id="PRO_0000095203" description="Adenylosuccinate synthetase">
    <location>
        <begin position="1"/>
        <end position="432"/>
    </location>
</feature>
<feature type="active site" description="Proton acceptor" evidence="1">
    <location>
        <position position="14"/>
    </location>
</feature>
<feature type="active site" description="Proton donor" evidence="1">
    <location>
        <position position="42"/>
    </location>
</feature>
<feature type="binding site" evidence="1">
    <location>
        <begin position="13"/>
        <end position="19"/>
    </location>
    <ligand>
        <name>GTP</name>
        <dbReference type="ChEBI" id="CHEBI:37565"/>
    </ligand>
</feature>
<feature type="binding site" description="in other chain" evidence="1">
    <location>
        <begin position="14"/>
        <end position="17"/>
    </location>
    <ligand>
        <name>IMP</name>
        <dbReference type="ChEBI" id="CHEBI:58053"/>
        <note>ligand shared between dimeric partners</note>
    </ligand>
</feature>
<feature type="binding site" evidence="1">
    <location>
        <position position="14"/>
    </location>
    <ligand>
        <name>Mg(2+)</name>
        <dbReference type="ChEBI" id="CHEBI:18420"/>
    </ligand>
</feature>
<feature type="binding site" description="in other chain" evidence="1">
    <location>
        <begin position="39"/>
        <end position="42"/>
    </location>
    <ligand>
        <name>IMP</name>
        <dbReference type="ChEBI" id="CHEBI:58053"/>
        <note>ligand shared between dimeric partners</note>
    </ligand>
</feature>
<feature type="binding site" evidence="1">
    <location>
        <begin position="41"/>
        <end position="43"/>
    </location>
    <ligand>
        <name>GTP</name>
        <dbReference type="ChEBI" id="CHEBI:37565"/>
    </ligand>
</feature>
<feature type="binding site" evidence="1">
    <location>
        <position position="41"/>
    </location>
    <ligand>
        <name>Mg(2+)</name>
        <dbReference type="ChEBI" id="CHEBI:18420"/>
    </ligand>
</feature>
<feature type="binding site" description="in other chain" evidence="1">
    <location>
        <position position="131"/>
    </location>
    <ligand>
        <name>IMP</name>
        <dbReference type="ChEBI" id="CHEBI:58053"/>
        <note>ligand shared between dimeric partners</note>
    </ligand>
</feature>
<feature type="binding site" evidence="1">
    <location>
        <position position="145"/>
    </location>
    <ligand>
        <name>IMP</name>
        <dbReference type="ChEBI" id="CHEBI:58053"/>
        <note>ligand shared between dimeric partners</note>
    </ligand>
</feature>
<feature type="binding site" description="in other chain" evidence="1">
    <location>
        <position position="226"/>
    </location>
    <ligand>
        <name>IMP</name>
        <dbReference type="ChEBI" id="CHEBI:58053"/>
        <note>ligand shared between dimeric partners</note>
    </ligand>
</feature>
<feature type="binding site" description="in other chain" evidence="1">
    <location>
        <position position="241"/>
    </location>
    <ligand>
        <name>IMP</name>
        <dbReference type="ChEBI" id="CHEBI:58053"/>
        <note>ligand shared between dimeric partners</note>
    </ligand>
</feature>
<feature type="binding site" evidence="1">
    <location>
        <begin position="301"/>
        <end position="307"/>
    </location>
    <ligand>
        <name>substrate</name>
    </ligand>
</feature>
<feature type="binding site" description="in other chain" evidence="1">
    <location>
        <position position="305"/>
    </location>
    <ligand>
        <name>IMP</name>
        <dbReference type="ChEBI" id="CHEBI:58053"/>
        <note>ligand shared between dimeric partners</note>
    </ligand>
</feature>
<feature type="binding site" evidence="1">
    <location>
        <position position="307"/>
    </location>
    <ligand>
        <name>GTP</name>
        <dbReference type="ChEBI" id="CHEBI:37565"/>
    </ligand>
</feature>
<feature type="binding site" evidence="1">
    <location>
        <begin position="333"/>
        <end position="335"/>
    </location>
    <ligand>
        <name>GTP</name>
        <dbReference type="ChEBI" id="CHEBI:37565"/>
    </ligand>
</feature>
<feature type="binding site" evidence="1">
    <location>
        <begin position="416"/>
        <end position="418"/>
    </location>
    <ligand>
        <name>GTP</name>
        <dbReference type="ChEBI" id="CHEBI:37565"/>
    </ligand>
</feature>
<name>PURA_NEIMB</name>
<dbReference type="EC" id="6.3.4.4" evidence="1"/>
<dbReference type="EMBL" id="AE002098">
    <property type="protein sequence ID" value="AAF41228.1"/>
    <property type="status" value="ALT_INIT"/>
    <property type="molecule type" value="Genomic_DNA"/>
</dbReference>
<dbReference type="PIR" id="F81153">
    <property type="entry name" value="F81153"/>
</dbReference>
<dbReference type="RefSeq" id="NP_273857.1">
    <property type="nucleotide sequence ID" value="NC_003112.2"/>
</dbReference>
<dbReference type="RefSeq" id="WP_002222698.1">
    <property type="nucleotide sequence ID" value="NC_003112.2"/>
</dbReference>
<dbReference type="SMR" id="Q9K012"/>
<dbReference type="FunCoup" id="Q9K012">
    <property type="interactions" value="529"/>
</dbReference>
<dbReference type="STRING" id="122586.NMB0815"/>
<dbReference type="PaxDb" id="122586-NMB0815"/>
<dbReference type="KEGG" id="nme:NMB0815"/>
<dbReference type="PATRIC" id="fig|122586.8.peg.1027"/>
<dbReference type="HOGENOM" id="CLU_029848_0_0_4"/>
<dbReference type="InParanoid" id="Q9K012"/>
<dbReference type="OrthoDB" id="9807553at2"/>
<dbReference type="UniPathway" id="UPA00075">
    <property type="reaction ID" value="UER00335"/>
</dbReference>
<dbReference type="Proteomes" id="UP000000425">
    <property type="component" value="Chromosome"/>
</dbReference>
<dbReference type="GO" id="GO:0005737">
    <property type="term" value="C:cytoplasm"/>
    <property type="evidence" value="ECO:0000318"/>
    <property type="project" value="GO_Central"/>
</dbReference>
<dbReference type="GO" id="GO:0004019">
    <property type="term" value="F:adenylosuccinate synthase activity"/>
    <property type="evidence" value="ECO:0000318"/>
    <property type="project" value="GO_Central"/>
</dbReference>
<dbReference type="GO" id="GO:0005525">
    <property type="term" value="F:GTP binding"/>
    <property type="evidence" value="ECO:0007669"/>
    <property type="project" value="UniProtKB-UniRule"/>
</dbReference>
<dbReference type="GO" id="GO:0000287">
    <property type="term" value="F:magnesium ion binding"/>
    <property type="evidence" value="ECO:0007669"/>
    <property type="project" value="UniProtKB-UniRule"/>
</dbReference>
<dbReference type="GO" id="GO:0044208">
    <property type="term" value="P:'de novo' AMP biosynthetic process"/>
    <property type="evidence" value="ECO:0000318"/>
    <property type="project" value="GO_Central"/>
</dbReference>
<dbReference type="GO" id="GO:0046040">
    <property type="term" value="P:IMP metabolic process"/>
    <property type="evidence" value="ECO:0000318"/>
    <property type="project" value="GO_Central"/>
</dbReference>
<dbReference type="CDD" id="cd03108">
    <property type="entry name" value="AdSS"/>
    <property type="match status" value="1"/>
</dbReference>
<dbReference type="FunFam" id="1.10.300.10:FF:000001">
    <property type="entry name" value="Adenylosuccinate synthetase"/>
    <property type="match status" value="1"/>
</dbReference>
<dbReference type="FunFam" id="3.90.170.10:FF:000001">
    <property type="entry name" value="Adenylosuccinate synthetase"/>
    <property type="match status" value="1"/>
</dbReference>
<dbReference type="Gene3D" id="3.40.440.10">
    <property type="entry name" value="Adenylosuccinate Synthetase, subunit A, domain 1"/>
    <property type="match status" value="1"/>
</dbReference>
<dbReference type="Gene3D" id="1.10.300.10">
    <property type="entry name" value="Adenylosuccinate Synthetase, subunit A, domain 2"/>
    <property type="match status" value="1"/>
</dbReference>
<dbReference type="Gene3D" id="3.90.170.10">
    <property type="entry name" value="Adenylosuccinate Synthetase, subunit A, domain 3"/>
    <property type="match status" value="1"/>
</dbReference>
<dbReference type="HAMAP" id="MF_00011">
    <property type="entry name" value="Adenylosucc_synth"/>
    <property type="match status" value="1"/>
</dbReference>
<dbReference type="InterPro" id="IPR018220">
    <property type="entry name" value="Adenylosuccin_syn_GTP-bd"/>
</dbReference>
<dbReference type="InterPro" id="IPR033128">
    <property type="entry name" value="Adenylosuccin_syn_Lys_AS"/>
</dbReference>
<dbReference type="InterPro" id="IPR042109">
    <property type="entry name" value="Adenylosuccinate_synth_dom1"/>
</dbReference>
<dbReference type="InterPro" id="IPR042110">
    <property type="entry name" value="Adenylosuccinate_synth_dom2"/>
</dbReference>
<dbReference type="InterPro" id="IPR042111">
    <property type="entry name" value="Adenylosuccinate_synth_dom3"/>
</dbReference>
<dbReference type="InterPro" id="IPR001114">
    <property type="entry name" value="Adenylosuccinate_synthetase"/>
</dbReference>
<dbReference type="InterPro" id="IPR027417">
    <property type="entry name" value="P-loop_NTPase"/>
</dbReference>
<dbReference type="NCBIfam" id="NF002223">
    <property type="entry name" value="PRK01117.1"/>
    <property type="match status" value="1"/>
</dbReference>
<dbReference type="NCBIfam" id="TIGR00184">
    <property type="entry name" value="purA"/>
    <property type="match status" value="1"/>
</dbReference>
<dbReference type="PANTHER" id="PTHR11846">
    <property type="entry name" value="ADENYLOSUCCINATE SYNTHETASE"/>
    <property type="match status" value="1"/>
</dbReference>
<dbReference type="PANTHER" id="PTHR11846:SF0">
    <property type="entry name" value="ADENYLOSUCCINATE SYNTHETASE"/>
    <property type="match status" value="1"/>
</dbReference>
<dbReference type="Pfam" id="PF00709">
    <property type="entry name" value="Adenylsucc_synt"/>
    <property type="match status" value="1"/>
</dbReference>
<dbReference type="SMART" id="SM00788">
    <property type="entry name" value="Adenylsucc_synt"/>
    <property type="match status" value="1"/>
</dbReference>
<dbReference type="SUPFAM" id="SSF52540">
    <property type="entry name" value="P-loop containing nucleoside triphosphate hydrolases"/>
    <property type="match status" value="1"/>
</dbReference>
<dbReference type="PROSITE" id="PS01266">
    <property type="entry name" value="ADENYLOSUCCIN_SYN_1"/>
    <property type="match status" value="1"/>
</dbReference>
<dbReference type="PROSITE" id="PS00513">
    <property type="entry name" value="ADENYLOSUCCIN_SYN_2"/>
    <property type="match status" value="1"/>
</dbReference>
<evidence type="ECO:0000255" key="1">
    <source>
        <dbReference type="HAMAP-Rule" id="MF_00011"/>
    </source>
</evidence>
<evidence type="ECO:0000305" key="2"/>
<comment type="function">
    <text evidence="1">Plays an important role in the de novo pathway of purine nucleotide biosynthesis. Catalyzes the first committed step in the biosynthesis of AMP from IMP.</text>
</comment>
<comment type="catalytic activity">
    <reaction evidence="1">
        <text>IMP + L-aspartate + GTP = N(6)-(1,2-dicarboxyethyl)-AMP + GDP + phosphate + 2 H(+)</text>
        <dbReference type="Rhea" id="RHEA:15753"/>
        <dbReference type="ChEBI" id="CHEBI:15378"/>
        <dbReference type="ChEBI" id="CHEBI:29991"/>
        <dbReference type="ChEBI" id="CHEBI:37565"/>
        <dbReference type="ChEBI" id="CHEBI:43474"/>
        <dbReference type="ChEBI" id="CHEBI:57567"/>
        <dbReference type="ChEBI" id="CHEBI:58053"/>
        <dbReference type="ChEBI" id="CHEBI:58189"/>
        <dbReference type="EC" id="6.3.4.4"/>
    </reaction>
</comment>
<comment type="cofactor">
    <cofactor evidence="1">
        <name>Mg(2+)</name>
        <dbReference type="ChEBI" id="CHEBI:18420"/>
    </cofactor>
    <text evidence="1">Binds 1 Mg(2+) ion per subunit.</text>
</comment>
<comment type="pathway">
    <text evidence="1">Purine metabolism; AMP biosynthesis via de novo pathway; AMP from IMP: step 1/2.</text>
</comment>
<comment type="subunit">
    <text evidence="1">Homodimer.</text>
</comment>
<comment type="subcellular location">
    <subcellularLocation>
        <location evidence="1">Cytoplasm</location>
    </subcellularLocation>
</comment>
<comment type="similarity">
    <text evidence="1">Belongs to the adenylosuccinate synthetase family.</text>
</comment>
<comment type="sequence caution" evidence="2">
    <conflict type="erroneous initiation">
        <sequence resource="EMBL-CDS" id="AAF41228"/>
    </conflict>
</comment>
<organism>
    <name type="scientific">Neisseria meningitidis serogroup B (strain ATCC BAA-335 / MC58)</name>
    <dbReference type="NCBI Taxonomy" id="122586"/>
    <lineage>
        <taxon>Bacteria</taxon>
        <taxon>Pseudomonadati</taxon>
        <taxon>Pseudomonadota</taxon>
        <taxon>Betaproteobacteria</taxon>
        <taxon>Neisseriales</taxon>
        <taxon>Neisseriaceae</taxon>
        <taxon>Neisseria</taxon>
    </lineage>
</organism>
<gene>
    <name evidence="1" type="primary">purA</name>
    <name type="ordered locus">NMB0815</name>
</gene>
<proteinExistence type="inferred from homology"/>
<reference key="1">
    <citation type="journal article" date="2000" name="Science">
        <title>Complete genome sequence of Neisseria meningitidis serogroup B strain MC58.</title>
        <authorList>
            <person name="Tettelin H."/>
            <person name="Saunders N.J."/>
            <person name="Heidelberg J.F."/>
            <person name="Jeffries A.C."/>
            <person name="Nelson K.E."/>
            <person name="Eisen J.A."/>
            <person name="Ketchum K.A."/>
            <person name="Hood D.W."/>
            <person name="Peden J.F."/>
            <person name="Dodson R.J."/>
            <person name="Nelson W.C."/>
            <person name="Gwinn M.L."/>
            <person name="DeBoy R.T."/>
            <person name="Peterson J.D."/>
            <person name="Hickey E.K."/>
            <person name="Haft D.H."/>
            <person name="Salzberg S.L."/>
            <person name="White O."/>
            <person name="Fleischmann R.D."/>
            <person name="Dougherty B.A."/>
            <person name="Mason T.M."/>
            <person name="Ciecko A."/>
            <person name="Parksey D.S."/>
            <person name="Blair E."/>
            <person name="Cittone H."/>
            <person name="Clark E.B."/>
            <person name="Cotton M.D."/>
            <person name="Utterback T.R."/>
            <person name="Khouri H.M."/>
            <person name="Qin H."/>
            <person name="Vamathevan J.J."/>
            <person name="Gill J."/>
            <person name="Scarlato V."/>
            <person name="Masignani V."/>
            <person name="Pizza M."/>
            <person name="Grandi G."/>
            <person name="Sun L."/>
            <person name="Smith H.O."/>
            <person name="Fraser C.M."/>
            <person name="Moxon E.R."/>
            <person name="Rappuoli R."/>
            <person name="Venter J.C."/>
        </authorList>
    </citation>
    <scope>NUCLEOTIDE SEQUENCE [LARGE SCALE GENOMIC DNA]</scope>
    <source>
        <strain>ATCC BAA-335 / MC58</strain>
    </source>
</reference>